<evidence type="ECO:0000255" key="1">
    <source>
        <dbReference type="HAMAP-Rule" id="MF_01575"/>
    </source>
</evidence>
<name>Y1617_BACC3</name>
<protein>
    <recommendedName>
        <fullName evidence="1">UPF0398 protein BCA_1617</fullName>
    </recommendedName>
</protein>
<dbReference type="EMBL" id="CP001407">
    <property type="protein sequence ID" value="ACO31105.1"/>
    <property type="molecule type" value="Genomic_DNA"/>
</dbReference>
<dbReference type="RefSeq" id="WP_000862921.1">
    <property type="nucleotide sequence ID" value="NZ_CP009318.1"/>
</dbReference>
<dbReference type="SMR" id="C1ENJ4"/>
<dbReference type="KEGG" id="bcx:BCA_1617"/>
<dbReference type="PATRIC" id="fig|572264.18.peg.1565"/>
<dbReference type="Proteomes" id="UP000002210">
    <property type="component" value="Chromosome"/>
</dbReference>
<dbReference type="Gene3D" id="3.40.50.450">
    <property type="match status" value="1"/>
</dbReference>
<dbReference type="HAMAP" id="MF_01575">
    <property type="entry name" value="UPF0398"/>
    <property type="match status" value="1"/>
</dbReference>
<dbReference type="InterPro" id="IPR010697">
    <property type="entry name" value="YspA"/>
</dbReference>
<dbReference type="NCBIfam" id="NF010181">
    <property type="entry name" value="PRK13660.1"/>
    <property type="match status" value="1"/>
</dbReference>
<dbReference type="PANTHER" id="PTHR38440:SF1">
    <property type="entry name" value="UPF0398 PROTEIN SPR0331"/>
    <property type="match status" value="1"/>
</dbReference>
<dbReference type="PANTHER" id="PTHR38440">
    <property type="entry name" value="UPF0398 PROTEIN YPSA"/>
    <property type="match status" value="1"/>
</dbReference>
<dbReference type="Pfam" id="PF06908">
    <property type="entry name" value="YpsA"/>
    <property type="match status" value="1"/>
</dbReference>
<dbReference type="PIRSF" id="PIRSF021290">
    <property type="entry name" value="DUF1273"/>
    <property type="match status" value="1"/>
</dbReference>
<dbReference type="SUPFAM" id="SSF102405">
    <property type="entry name" value="MCP/YpsA-like"/>
    <property type="match status" value="1"/>
</dbReference>
<feature type="chain" id="PRO_1000185580" description="UPF0398 protein BCA_1617">
    <location>
        <begin position="1"/>
        <end position="184"/>
    </location>
</feature>
<organism>
    <name type="scientific">Bacillus cereus (strain 03BB102)</name>
    <dbReference type="NCBI Taxonomy" id="572264"/>
    <lineage>
        <taxon>Bacteria</taxon>
        <taxon>Bacillati</taxon>
        <taxon>Bacillota</taxon>
        <taxon>Bacilli</taxon>
        <taxon>Bacillales</taxon>
        <taxon>Bacillaceae</taxon>
        <taxon>Bacillus</taxon>
        <taxon>Bacillus cereus group</taxon>
    </lineage>
</organism>
<gene>
    <name type="ordered locus">BCA_1617</name>
</gene>
<comment type="similarity">
    <text evidence="1">Belongs to the UPF0398 family.</text>
</comment>
<accession>C1ENJ4</accession>
<reference key="1">
    <citation type="submission" date="2009-02" db="EMBL/GenBank/DDBJ databases">
        <title>Genome sequence of Bacillus cereus 03BB102.</title>
        <authorList>
            <person name="Dodson R.J."/>
            <person name="Jackson P."/>
            <person name="Munk A.C."/>
            <person name="Brettin T."/>
            <person name="Bruce D."/>
            <person name="Detter C."/>
            <person name="Tapia R."/>
            <person name="Han C."/>
            <person name="Sutton G."/>
            <person name="Sims D."/>
        </authorList>
    </citation>
    <scope>NUCLEOTIDE SEQUENCE [LARGE SCALE GENOMIC DNA]</scope>
    <source>
        <strain>03BB102</strain>
    </source>
</reference>
<proteinExistence type="inferred from homology"/>
<sequence length="184" mass="21510">MKVIAVTGYKPFELGIFKNDHPGVECIKKALRRKLTAFVEDGLEWVIISGQLGVELWAAEVVFEIQVEYPDLKLAVFTPFLEQEEGWKEDNREYYEFILSQADHVDSITKRKYESPEQFKLKNQFFIEKSDALLAVYDEEKPGSPKYIVEAAKKKGEIENYHSYFILFSDLQDIIEEEQWNNAE</sequence>